<protein>
    <recommendedName>
        <fullName evidence="1">Protein SprT-like</fullName>
    </recommendedName>
</protein>
<reference key="1">
    <citation type="journal article" date="2006" name="J. Bacteriol.">
        <title>Pathogenomic sequence analysis of Bacillus cereus and Bacillus thuringiensis isolates closely related to Bacillus anthracis.</title>
        <authorList>
            <person name="Han C.S."/>
            <person name="Xie G."/>
            <person name="Challacombe J.F."/>
            <person name="Altherr M.R."/>
            <person name="Bhotika S.S."/>
            <person name="Bruce D."/>
            <person name="Campbell C.S."/>
            <person name="Campbell M.L."/>
            <person name="Chen J."/>
            <person name="Chertkov O."/>
            <person name="Cleland C."/>
            <person name="Dimitrijevic M."/>
            <person name="Doggett N.A."/>
            <person name="Fawcett J.J."/>
            <person name="Glavina T."/>
            <person name="Goodwin L.A."/>
            <person name="Hill K.K."/>
            <person name="Hitchcock P."/>
            <person name="Jackson P.J."/>
            <person name="Keim P."/>
            <person name="Kewalramani A.R."/>
            <person name="Longmire J."/>
            <person name="Lucas S."/>
            <person name="Malfatti S."/>
            <person name="McMurry K."/>
            <person name="Meincke L.J."/>
            <person name="Misra M."/>
            <person name="Moseman B.L."/>
            <person name="Mundt M."/>
            <person name="Munk A.C."/>
            <person name="Okinaka R.T."/>
            <person name="Parson-Quintana B."/>
            <person name="Reilly L.P."/>
            <person name="Richardson P."/>
            <person name="Robinson D.L."/>
            <person name="Rubin E."/>
            <person name="Saunders E."/>
            <person name="Tapia R."/>
            <person name="Tesmer J.G."/>
            <person name="Thayer N."/>
            <person name="Thompson L.S."/>
            <person name="Tice H."/>
            <person name="Ticknor L.O."/>
            <person name="Wills P.L."/>
            <person name="Brettin T.S."/>
            <person name="Gilna P."/>
        </authorList>
    </citation>
    <scope>NUCLEOTIDE SEQUENCE [LARGE SCALE GENOMIC DNA]</scope>
    <source>
        <strain>97-27</strain>
    </source>
</reference>
<name>SPRTL_BACHK</name>
<sequence length="152" mass="18368">MDEQEIQRLVEEVSLQYFGMPFLHKAMFNSRLRTTGGRYLLNTHNIELNYRYYEMYGKEELVGIVKHELCHYHLHITGRGYKHRDKDFRELLKAVDAPRFCKRMINEEKGKKVYMYECMECSLQYVRRRQINTKRYVCGKCKGKLILIKKTS</sequence>
<comment type="cofactor">
    <cofactor evidence="1">
        <name>Zn(2+)</name>
        <dbReference type="ChEBI" id="CHEBI:29105"/>
    </cofactor>
    <text evidence="1">Binds 1 zinc ion.</text>
</comment>
<comment type="subcellular location">
    <subcellularLocation>
        <location evidence="1">Cytoplasm</location>
    </subcellularLocation>
</comment>
<comment type="similarity">
    <text evidence="1">Belongs to the SprT family.</text>
</comment>
<evidence type="ECO:0000255" key="1">
    <source>
        <dbReference type="HAMAP-Rule" id="MF_00745"/>
    </source>
</evidence>
<organism>
    <name type="scientific">Bacillus thuringiensis subsp. konkukian (strain 97-27)</name>
    <dbReference type="NCBI Taxonomy" id="281309"/>
    <lineage>
        <taxon>Bacteria</taxon>
        <taxon>Bacillati</taxon>
        <taxon>Bacillota</taxon>
        <taxon>Bacilli</taxon>
        <taxon>Bacillales</taxon>
        <taxon>Bacillaceae</taxon>
        <taxon>Bacillus</taxon>
        <taxon>Bacillus cereus group</taxon>
    </lineage>
</organism>
<keyword id="KW-0963">Cytoplasm</keyword>
<keyword id="KW-0479">Metal-binding</keyword>
<keyword id="KW-0862">Zinc</keyword>
<feature type="chain" id="PRO_1000046509" description="Protein SprT-like">
    <location>
        <begin position="1"/>
        <end position="152"/>
    </location>
</feature>
<feature type="domain" description="SprT-like" evidence="1">
    <location>
        <begin position="7"/>
        <end position="148"/>
    </location>
</feature>
<feature type="active site" evidence="1">
    <location>
        <position position="68"/>
    </location>
</feature>
<feature type="binding site" evidence="1">
    <location>
        <position position="67"/>
    </location>
    <ligand>
        <name>Zn(2+)</name>
        <dbReference type="ChEBI" id="CHEBI:29105"/>
    </ligand>
</feature>
<feature type="binding site" evidence="1">
    <location>
        <position position="71"/>
    </location>
    <ligand>
        <name>Zn(2+)</name>
        <dbReference type="ChEBI" id="CHEBI:29105"/>
    </ligand>
</feature>
<accession>Q6HPD7</accession>
<proteinExistence type="inferred from homology"/>
<dbReference type="EMBL" id="AE017355">
    <property type="protein sequence ID" value="AAT62114.1"/>
    <property type="molecule type" value="Genomic_DNA"/>
</dbReference>
<dbReference type="RefSeq" id="WP_000344247.1">
    <property type="nucleotide sequence ID" value="NC_005957.1"/>
</dbReference>
<dbReference type="RefSeq" id="YP_034583.1">
    <property type="nucleotide sequence ID" value="NC_005957.1"/>
</dbReference>
<dbReference type="KEGG" id="btk:BT9727_0228"/>
<dbReference type="PATRIC" id="fig|281309.8.peg.244"/>
<dbReference type="HOGENOM" id="CLU_123820_0_0_9"/>
<dbReference type="Proteomes" id="UP000001301">
    <property type="component" value="Chromosome"/>
</dbReference>
<dbReference type="GO" id="GO:0005737">
    <property type="term" value="C:cytoplasm"/>
    <property type="evidence" value="ECO:0007669"/>
    <property type="project" value="UniProtKB-SubCell"/>
</dbReference>
<dbReference type="GO" id="GO:0008270">
    <property type="term" value="F:zinc ion binding"/>
    <property type="evidence" value="ECO:0007669"/>
    <property type="project" value="UniProtKB-UniRule"/>
</dbReference>
<dbReference type="GO" id="GO:0006950">
    <property type="term" value="P:response to stress"/>
    <property type="evidence" value="ECO:0007669"/>
    <property type="project" value="UniProtKB-ARBA"/>
</dbReference>
<dbReference type="HAMAP" id="MF_00745">
    <property type="entry name" value="SprT_like"/>
    <property type="match status" value="1"/>
</dbReference>
<dbReference type="InterPro" id="IPR006640">
    <property type="entry name" value="SprT-like_domain"/>
</dbReference>
<dbReference type="InterPro" id="IPR035240">
    <property type="entry name" value="SprT_Zn_ribbon"/>
</dbReference>
<dbReference type="InterPro" id="IPR023524">
    <property type="entry name" value="Uncharacterised_SprT-like"/>
</dbReference>
<dbReference type="NCBIfam" id="NF003339">
    <property type="entry name" value="PRK04351.1"/>
    <property type="match status" value="1"/>
</dbReference>
<dbReference type="Pfam" id="PF10263">
    <property type="entry name" value="SprT-like"/>
    <property type="match status" value="1"/>
</dbReference>
<dbReference type="Pfam" id="PF17283">
    <property type="entry name" value="Zn_ribbon_SprT"/>
    <property type="match status" value="1"/>
</dbReference>
<dbReference type="SMART" id="SM00731">
    <property type="entry name" value="SprT"/>
    <property type="match status" value="1"/>
</dbReference>
<gene>
    <name type="ordered locus">BT9727_0228</name>
</gene>